<dbReference type="EC" id="4.3.3.7" evidence="1"/>
<dbReference type="EMBL" id="CP001130">
    <property type="protein sequence ID" value="ACG57048.1"/>
    <property type="molecule type" value="Genomic_DNA"/>
</dbReference>
<dbReference type="RefSeq" id="WP_012513404.1">
    <property type="nucleotide sequence ID" value="NC_011126.1"/>
</dbReference>
<dbReference type="SMR" id="B4U7D7"/>
<dbReference type="STRING" id="380749.HY04AAS1_0358"/>
<dbReference type="KEGG" id="hya:HY04AAS1_0358"/>
<dbReference type="eggNOG" id="COG0329">
    <property type="taxonomic scope" value="Bacteria"/>
</dbReference>
<dbReference type="HOGENOM" id="CLU_049343_7_1_0"/>
<dbReference type="OrthoDB" id="9782828at2"/>
<dbReference type="UniPathway" id="UPA00034">
    <property type="reaction ID" value="UER00017"/>
</dbReference>
<dbReference type="GO" id="GO:0005829">
    <property type="term" value="C:cytosol"/>
    <property type="evidence" value="ECO:0007669"/>
    <property type="project" value="TreeGrafter"/>
</dbReference>
<dbReference type="GO" id="GO:0008840">
    <property type="term" value="F:4-hydroxy-tetrahydrodipicolinate synthase activity"/>
    <property type="evidence" value="ECO:0007669"/>
    <property type="project" value="UniProtKB-UniRule"/>
</dbReference>
<dbReference type="GO" id="GO:0019877">
    <property type="term" value="P:diaminopimelate biosynthetic process"/>
    <property type="evidence" value="ECO:0007669"/>
    <property type="project" value="UniProtKB-UniRule"/>
</dbReference>
<dbReference type="GO" id="GO:0009089">
    <property type="term" value="P:lysine biosynthetic process via diaminopimelate"/>
    <property type="evidence" value="ECO:0007669"/>
    <property type="project" value="UniProtKB-UniRule"/>
</dbReference>
<dbReference type="CDD" id="cd00950">
    <property type="entry name" value="DHDPS"/>
    <property type="match status" value="1"/>
</dbReference>
<dbReference type="Gene3D" id="3.20.20.70">
    <property type="entry name" value="Aldolase class I"/>
    <property type="match status" value="1"/>
</dbReference>
<dbReference type="HAMAP" id="MF_00418">
    <property type="entry name" value="DapA"/>
    <property type="match status" value="1"/>
</dbReference>
<dbReference type="InterPro" id="IPR013785">
    <property type="entry name" value="Aldolase_TIM"/>
</dbReference>
<dbReference type="InterPro" id="IPR005263">
    <property type="entry name" value="DapA"/>
</dbReference>
<dbReference type="InterPro" id="IPR002220">
    <property type="entry name" value="DapA-like"/>
</dbReference>
<dbReference type="InterPro" id="IPR020625">
    <property type="entry name" value="Schiff_base-form_aldolases_AS"/>
</dbReference>
<dbReference type="NCBIfam" id="TIGR00674">
    <property type="entry name" value="dapA"/>
    <property type="match status" value="1"/>
</dbReference>
<dbReference type="PANTHER" id="PTHR12128:SF66">
    <property type="entry name" value="4-HYDROXY-2-OXOGLUTARATE ALDOLASE, MITOCHONDRIAL"/>
    <property type="match status" value="1"/>
</dbReference>
<dbReference type="PANTHER" id="PTHR12128">
    <property type="entry name" value="DIHYDRODIPICOLINATE SYNTHASE"/>
    <property type="match status" value="1"/>
</dbReference>
<dbReference type="Pfam" id="PF00701">
    <property type="entry name" value="DHDPS"/>
    <property type="match status" value="1"/>
</dbReference>
<dbReference type="PIRSF" id="PIRSF001365">
    <property type="entry name" value="DHDPS"/>
    <property type="match status" value="1"/>
</dbReference>
<dbReference type="PRINTS" id="PR00146">
    <property type="entry name" value="DHPICSNTHASE"/>
</dbReference>
<dbReference type="SMART" id="SM01130">
    <property type="entry name" value="DHDPS"/>
    <property type="match status" value="1"/>
</dbReference>
<dbReference type="SUPFAM" id="SSF51569">
    <property type="entry name" value="Aldolase"/>
    <property type="match status" value="1"/>
</dbReference>
<dbReference type="PROSITE" id="PS00666">
    <property type="entry name" value="DHDPS_2"/>
    <property type="match status" value="1"/>
</dbReference>
<accession>B4U7D7</accession>
<evidence type="ECO:0000255" key="1">
    <source>
        <dbReference type="HAMAP-Rule" id="MF_00418"/>
    </source>
</evidence>
<evidence type="ECO:0000305" key="2"/>
<organism>
    <name type="scientific">Hydrogenobaculum sp. (strain Y04AAS1)</name>
    <dbReference type="NCBI Taxonomy" id="380749"/>
    <lineage>
        <taxon>Bacteria</taxon>
        <taxon>Pseudomonadati</taxon>
        <taxon>Aquificota</taxon>
        <taxon>Aquificia</taxon>
        <taxon>Aquificales</taxon>
        <taxon>Aquificaceae</taxon>
        <taxon>Hydrogenobaculum</taxon>
    </lineage>
</organism>
<proteinExistence type="inferred from homology"/>
<sequence length="290" mass="32510">MLTGSITAIVTPFKNGEVDYGAFERLIEFQIQNGTDGILVCGTSGESPTLSYEEHEAVIEFAVKSAKKRIHIMAGTGANSTEEALRFTTFAKAVGADSALLVVPYYNKPTQEGLYRHFSKIAKEVDIDIYIYNIPSRTGIEISVDTLERLAKDHKNIKGSKESTPNMDRISEILKRIPNFTVFSGDDSLTLPMMSLGAKGVVSVISNVMPKEIKEFTSYALKGDFEKARDMHYYLLEIFKIMFIETNPIPVKTALSLMGMVKKEFRLPLCEMLPQNEEKLKEVLKKYNLI</sequence>
<feature type="chain" id="PRO_1000124043" description="4-hydroxy-tetrahydrodipicolinate synthase">
    <location>
        <begin position="1"/>
        <end position="290"/>
    </location>
</feature>
<feature type="active site" description="Proton donor/acceptor" evidence="1">
    <location>
        <position position="132"/>
    </location>
</feature>
<feature type="active site" description="Schiff-base intermediate with substrate" evidence="1">
    <location>
        <position position="161"/>
    </location>
</feature>
<feature type="binding site" evidence="1">
    <location>
        <position position="44"/>
    </location>
    <ligand>
        <name>pyruvate</name>
        <dbReference type="ChEBI" id="CHEBI:15361"/>
    </ligand>
</feature>
<feature type="binding site" evidence="1">
    <location>
        <position position="202"/>
    </location>
    <ligand>
        <name>pyruvate</name>
        <dbReference type="ChEBI" id="CHEBI:15361"/>
    </ligand>
</feature>
<feature type="site" description="Part of a proton relay during catalysis" evidence="1">
    <location>
        <position position="43"/>
    </location>
</feature>
<feature type="site" description="Part of a proton relay during catalysis" evidence="1">
    <location>
        <position position="106"/>
    </location>
</feature>
<name>DAPA_HYDS0</name>
<reference key="1">
    <citation type="journal article" date="2009" name="J. Bacteriol.">
        <title>Complete and draft genome sequences of six members of the Aquificales.</title>
        <authorList>
            <person name="Reysenbach A.-L."/>
            <person name="Hamamura N."/>
            <person name="Podar M."/>
            <person name="Griffiths E."/>
            <person name="Ferreira S."/>
            <person name="Hochstein R."/>
            <person name="Heidelberg J."/>
            <person name="Johnson J."/>
            <person name="Mead D."/>
            <person name="Pohorille A."/>
            <person name="Sarmiento M."/>
            <person name="Schweighofer K."/>
            <person name="Seshadri R."/>
            <person name="Voytek M.A."/>
        </authorList>
    </citation>
    <scope>NUCLEOTIDE SEQUENCE [LARGE SCALE GENOMIC DNA]</scope>
    <source>
        <strain>Y04AAS1</strain>
    </source>
</reference>
<keyword id="KW-0028">Amino-acid biosynthesis</keyword>
<keyword id="KW-0963">Cytoplasm</keyword>
<keyword id="KW-0220">Diaminopimelate biosynthesis</keyword>
<keyword id="KW-0456">Lyase</keyword>
<keyword id="KW-0457">Lysine biosynthesis</keyword>
<keyword id="KW-0704">Schiff base</keyword>
<comment type="function">
    <text evidence="1">Catalyzes the condensation of (S)-aspartate-beta-semialdehyde [(S)-ASA] and pyruvate to 4-hydroxy-tetrahydrodipicolinate (HTPA).</text>
</comment>
<comment type="catalytic activity">
    <reaction evidence="1">
        <text>L-aspartate 4-semialdehyde + pyruvate = (2S,4S)-4-hydroxy-2,3,4,5-tetrahydrodipicolinate + H2O + H(+)</text>
        <dbReference type="Rhea" id="RHEA:34171"/>
        <dbReference type="ChEBI" id="CHEBI:15361"/>
        <dbReference type="ChEBI" id="CHEBI:15377"/>
        <dbReference type="ChEBI" id="CHEBI:15378"/>
        <dbReference type="ChEBI" id="CHEBI:67139"/>
        <dbReference type="ChEBI" id="CHEBI:537519"/>
        <dbReference type="EC" id="4.3.3.7"/>
    </reaction>
</comment>
<comment type="pathway">
    <text evidence="1">Amino-acid biosynthesis; L-lysine biosynthesis via DAP pathway; (S)-tetrahydrodipicolinate from L-aspartate: step 3/4.</text>
</comment>
<comment type="subunit">
    <text evidence="1">Homotetramer; dimer of dimers.</text>
</comment>
<comment type="subcellular location">
    <subcellularLocation>
        <location evidence="1">Cytoplasm</location>
    </subcellularLocation>
</comment>
<comment type="similarity">
    <text evidence="1">Belongs to the DapA family.</text>
</comment>
<comment type="caution">
    <text evidence="2">Was originally thought to be a dihydrodipicolinate synthase (DHDPS), catalyzing the condensation of (S)-aspartate-beta-semialdehyde [(S)-ASA] and pyruvate to dihydrodipicolinate (DHDP). However, it was shown in E.coli that the product of the enzymatic reaction is not dihydrodipicolinate but in fact (4S)-4-hydroxy-2,3,4,5-tetrahydro-(2S)-dipicolinic acid (HTPA), and that the consecutive dehydration reaction leading to DHDP is not spontaneous but catalyzed by DapB.</text>
</comment>
<protein>
    <recommendedName>
        <fullName evidence="1">4-hydroxy-tetrahydrodipicolinate synthase</fullName>
        <shortName evidence="1">HTPA synthase</shortName>
        <ecNumber evidence="1">4.3.3.7</ecNumber>
    </recommendedName>
</protein>
<gene>
    <name evidence="1" type="primary">dapA</name>
    <name type="ordered locus">HY04AAS1_0358</name>
</gene>